<reference key="1">
    <citation type="journal article" date="2011" name="J. Bacteriol.">
        <title>Genome of Ochrobactrum anthropi ATCC 49188 T, a versatile opportunistic pathogen and symbiont of several eukaryotic hosts.</title>
        <authorList>
            <person name="Chain P.S."/>
            <person name="Lang D.M."/>
            <person name="Comerci D.J."/>
            <person name="Malfatti S.A."/>
            <person name="Vergez L.M."/>
            <person name="Shin M."/>
            <person name="Ugalde R.A."/>
            <person name="Garcia E."/>
            <person name="Tolmasky M.E."/>
        </authorList>
    </citation>
    <scope>NUCLEOTIDE SEQUENCE [LARGE SCALE GENOMIC DNA]</scope>
    <source>
        <strain>ATCC 49188 / DSM 6882 / CCUG 24695 / JCM 21032 / LMG 3331 / NBRC 15819 / NCTC 12168 / Alc 37</strain>
    </source>
</reference>
<name>GREA_BRUA4</name>
<protein>
    <recommendedName>
        <fullName evidence="1">Transcription elongation factor GreA</fullName>
    </recommendedName>
    <alternativeName>
        <fullName evidence="1">Transcript cleavage factor GreA</fullName>
    </alternativeName>
</protein>
<sequence length="157" mass="17373">MEKFPMTPGGFEKLKEELRWRQQSERPRIIEAIAEARAHGDLSENAEYHAAKEAQSLNEGRINELEDLVARAEIIDVSKLSGDRIKFGATVTMIDEDTDEEKVYQIVGDQEADVKEGRISISSPIARALIGKGEGDTIEVNAPGGSRSYEIVGLKFV</sequence>
<evidence type="ECO:0000255" key="1">
    <source>
        <dbReference type="HAMAP-Rule" id="MF_00105"/>
    </source>
</evidence>
<accession>A6WZH2</accession>
<proteinExistence type="inferred from homology"/>
<organism>
    <name type="scientific">Brucella anthropi (strain ATCC 49188 / DSM 6882 / CCUG 24695 / JCM 21032 / LMG 3331 / NBRC 15819 / NCTC 12168 / Alc 37)</name>
    <name type="common">Ochrobactrum anthropi</name>
    <dbReference type="NCBI Taxonomy" id="439375"/>
    <lineage>
        <taxon>Bacteria</taxon>
        <taxon>Pseudomonadati</taxon>
        <taxon>Pseudomonadota</taxon>
        <taxon>Alphaproteobacteria</taxon>
        <taxon>Hyphomicrobiales</taxon>
        <taxon>Brucellaceae</taxon>
        <taxon>Brucella/Ochrobactrum group</taxon>
        <taxon>Brucella</taxon>
    </lineage>
</organism>
<feature type="chain" id="PRO_1000075878" description="Transcription elongation factor GreA">
    <location>
        <begin position="1"/>
        <end position="157"/>
    </location>
</feature>
<gene>
    <name evidence="1" type="primary">greA</name>
    <name type="ordered locus">Oant_1660</name>
</gene>
<comment type="function">
    <text evidence="1">Necessary for efficient RNA polymerase transcription elongation past template-encoded arresting sites. The arresting sites in DNA have the property of trapping a certain fraction of elongating RNA polymerases that pass through, resulting in locked ternary complexes. Cleavage of the nascent transcript by cleavage factors such as GreA or GreB allows the resumption of elongation from the new 3'terminus. GreA releases sequences of 2 to 3 nucleotides.</text>
</comment>
<comment type="similarity">
    <text evidence="1">Belongs to the GreA/GreB family.</text>
</comment>
<keyword id="KW-0238">DNA-binding</keyword>
<keyword id="KW-1185">Reference proteome</keyword>
<keyword id="KW-0804">Transcription</keyword>
<keyword id="KW-0805">Transcription regulation</keyword>
<dbReference type="EMBL" id="CP000758">
    <property type="protein sequence ID" value="ABS14376.1"/>
    <property type="molecule type" value="Genomic_DNA"/>
</dbReference>
<dbReference type="RefSeq" id="WP_012091684.1">
    <property type="nucleotide sequence ID" value="NC_009667.1"/>
</dbReference>
<dbReference type="SMR" id="A6WZH2"/>
<dbReference type="STRING" id="439375.Oant_1660"/>
<dbReference type="KEGG" id="oan:Oant_1660"/>
<dbReference type="PATRIC" id="fig|439375.7.peg.1750"/>
<dbReference type="eggNOG" id="COG0782">
    <property type="taxonomic scope" value="Bacteria"/>
</dbReference>
<dbReference type="HOGENOM" id="CLU_101379_2_0_5"/>
<dbReference type="Proteomes" id="UP000002301">
    <property type="component" value="Chromosome 1"/>
</dbReference>
<dbReference type="GO" id="GO:0003677">
    <property type="term" value="F:DNA binding"/>
    <property type="evidence" value="ECO:0007669"/>
    <property type="project" value="UniProtKB-UniRule"/>
</dbReference>
<dbReference type="GO" id="GO:0070063">
    <property type="term" value="F:RNA polymerase binding"/>
    <property type="evidence" value="ECO:0007669"/>
    <property type="project" value="InterPro"/>
</dbReference>
<dbReference type="GO" id="GO:0006354">
    <property type="term" value="P:DNA-templated transcription elongation"/>
    <property type="evidence" value="ECO:0007669"/>
    <property type="project" value="TreeGrafter"/>
</dbReference>
<dbReference type="GO" id="GO:0032784">
    <property type="term" value="P:regulation of DNA-templated transcription elongation"/>
    <property type="evidence" value="ECO:0007669"/>
    <property type="project" value="UniProtKB-UniRule"/>
</dbReference>
<dbReference type="FunFam" id="1.10.287.180:FF:000001">
    <property type="entry name" value="Transcription elongation factor GreA"/>
    <property type="match status" value="1"/>
</dbReference>
<dbReference type="FunFam" id="3.10.50.30:FF:000001">
    <property type="entry name" value="Transcription elongation factor GreA"/>
    <property type="match status" value="1"/>
</dbReference>
<dbReference type="Gene3D" id="3.10.50.30">
    <property type="entry name" value="Transcription elongation factor, GreA/GreB, C-terminal domain"/>
    <property type="match status" value="1"/>
</dbReference>
<dbReference type="Gene3D" id="1.10.287.180">
    <property type="entry name" value="Transcription elongation factor, GreA/GreB, N-terminal domain"/>
    <property type="match status" value="1"/>
</dbReference>
<dbReference type="HAMAP" id="MF_00105">
    <property type="entry name" value="GreA_GreB"/>
    <property type="match status" value="1"/>
</dbReference>
<dbReference type="InterPro" id="IPR036953">
    <property type="entry name" value="GreA/GreB_C_sf"/>
</dbReference>
<dbReference type="InterPro" id="IPR018151">
    <property type="entry name" value="TF_GreA/GreB_CS"/>
</dbReference>
<dbReference type="InterPro" id="IPR006359">
    <property type="entry name" value="Tscrpt_elong_fac_GreA"/>
</dbReference>
<dbReference type="InterPro" id="IPR028624">
    <property type="entry name" value="Tscrpt_elong_fac_GreA/B"/>
</dbReference>
<dbReference type="InterPro" id="IPR001437">
    <property type="entry name" value="Tscrpt_elong_fac_GreA/B_C"/>
</dbReference>
<dbReference type="InterPro" id="IPR023459">
    <property type="entry name" value="Tscrpt_elong_fac_GreA/B_fam"/>
</dbReference>
<dbReference type="InterPro" id="IPR022691">
    <property type="entry name" value="Tscrpt_elong_fac_GreA/B_N"/>
</dbReference>
<dbReference type="InterPro" id="IPR036805">
    <property type="entry name" value="Tscrpt_elong_fac_GreA/B_N_sf"/>
</dbReference>
<dbReference type="NCBIfam" id="TIGR01462">
    <property type="entry name" value="greA"/>
    <property type="match status" value="1"/>
</dbReference>
<dbReference type="NCBIfam" id="NF001261">
    <property type="entry name" value="PRK00226.1-2"/>
    <property type="match status" value="1"/>
</dbReference>
<dbReference type="NCBIfam" id="NF001263">
    <property type="entry name" value="PRK00226.1-4"/>
    <property type="match status" value="1"/>
</dbReference>
<dbReference type="NCBIfam" id="NF001264">
    <property type="entry name" value="PRK00226.1-5"/>
    <property type="match status" value="1"/>
</dbReference>
<dbReference type="PANTHER" id="PTHR30437">
    <property type="entry name" value="TRANSCRIPTION ELONGATION FACTOR GREA"/>
    <property type="match status" value="1"/>
</dbReference>
<dbReference type="PANTHER" id="PTHR30437:SF4">
    <property type="entry name" value="TRANSCRIPTION ELONGATION FACTOR GREA"/>
    <property type="match status" value="1"/>
</dbReference>
<dbReference type="Pfam" id="PF01272">
    <property type="entry name" value="GreA_GreB"/>
    <property type="match status" value="1"/>
</dbReference>
<dbReference type="Pfam" id="PF03449">
    <property type="entry name" value="GreA_GreB_N"/>
    <property type="match status" value="1"/>
</dbReference>
<dbReference type="PIRSF" id="PIRSF006092">
    <property type="entry name" value="GreA_GreB"/>
    <property type="match status" value="1"/>
</dbReference>
<dbReference type="SUPFAM" id="SSF54534">
    <property type="entry name" value="FKBP-like"/>
    <property type="match status" value="1"/>
</dbReference>
<dbReference type="SUPFAM" id="SSF46557">
    <property type="entry name" value="GreA transcript cleavage protein, N-terminal domain"/>
    <property type="match status" value="1"/>
</dbReference>
<dbReference type="PROSITE" id="PS00829">
    <property type="entry name" value="GREAB_1"/>
    <property type="match status" value="1"/>
</dbReference>
<dbReference type="PROSITE" id="PS00830">
    <property type="entry name" value="GREAB_2"/>
    <property type="match status" value="1"/>
</dbReference>